<organism>
    <name type="scientific">Arabidopsis thaliana</name>
    <name type="common">Mouse-ear cress</name>
    <dbReference type="NCBI Taxonomy" id="3702"/>
    <lineage>
        <taxon>Eukaryota</taxon>
        <taxon>Viridiplantae</taxon>
        <taxon>Streptophyta</taxon>
        <taxon>Embryophyta</taxon>
        <taxon>Tracheophyta</taxon>
        <taxon>Spermatophyta</taxon>
        <taxon>Magnoliopsida</taxon>
        <taxon>eudicotyledons</taxon>
        <taxon>Gunneridae</taxon>
        <taxon>Pentapetalae</taxon>
        <taxon>rosids</taxon>
        <taxon>malvids</taxon>
        <taxon>Brassicales</taxon>
        <taxon>Brassicaceae</taxon>
        <taxon>Camelineae</taxon>
        <taxon>Arabidopsis</taxon>
    </lineage>
</organism>
<evidence type="ECO:0000255" key="1"/>
<evidence type="ECO:0000255" key="2">
    <source>
        <dbReference type="PROSITE-ProRule" id="PRU00175"/>
    </source>
</evidence>
<evidence type="ECO:0000256" key="3">
    <source>
        <dbReference type="SAM" id="MobiDB-lite"/>
    </source>
</evidence>
<evidence type="ECO:0000269" key="4">
    <source>
    </source>
</evidence>
<evidence type="ECO:0000303" key="5">
    <source>
    </source>
</evidence>
<evidence type="ECO:0000305" key="6"/>
<evidence type="ECO:0000312" key="7">
    <source>
        <dbReference type="Araport" id="AT5G01450"/>
    </source>
</evidence>
<evidence type="ECO:0000312" key="8">
    <source>
        <dbReference type="EMBL" id="CAB81928.1"/>
    </source>
</evidence>
<proteinExistence type="evidence at protein level"/>
<feature type="chain" id="PRO_0000446985" description="E3 ubiquitin-protein ligase APD2">
    <location>
        <begin position="1"/>
        <end position="444"/>
    </location>
</feature>
<feature type="transmembrane region" description="Helical" evidence="1">
    <location>
        <begin position="74"/>
        <end position="94"/>
    </location>
</feature>
<feature type="transmembrane region" description="Helical" evidence="1">
    <location>
        <begin position="312"/>
        <end position="332"/>
    </location>
</feature>
<feature type="zinc finger region" description="RING-type" evidence="2">
    <location>
        <begin position="393"/>
        <end position="432"/>
    </location>
</feature>
<feature type="region of interest" description="Disordered" evidence="3">
    <location>
        <begin position="1"/>
        <end position="41"/>
    </location>
</feature>
<feature type="compositionally biased region" description="Low complexity" evidence="3">
    <location>
        <begin position="1"/>
        <end position="15"/>
    </location>
</feature>
<feature type="compositionally biased region" description="Basic and acidic residues" evidence="3">
    <location>
        <begin position="17"/>
        <end position="41"/>
    </location>
</feature>
<protein>
    <recommendedName>
        <fullName evidence="6">E3 ubiquitin-protein ligase APD2</fullName>
        <ecNumber evidence="4">2.3.2.27</ecNumber>
    </recommendedName>
    <alternativeName>
        <fullName evidence="5">Protein ABERRANT POLLEN DEVELOPMENT 2</fullName>
    </alternativeName>
</protein>
<gene>
    <name evidence="5" type="primary">APD2</name>
    <name evidence="7" type="ordered locus">At5g01450</name>
    <name evidence="8" type="ORF">T10O8.160</name>
</gene>
<reference key="1">
    <citation type="journal article" date="2000" name="Nature">
        <title>Sequence and analysis of chromosome 5 of the plant Arabidopsis thaliana.</title>
        <authorList>
            <person name="Tabata S."/>
            <person name="Kaneko T."/>
            <person name="Nakamura Y."/>
            <person name="Kotani H."/>
            <person name="Kato T."/>
            <person name="Asamizu E."/>
            <person name="Miyajima N."/>
            <person name="Sasamoto S."/>
            <person name="Kimura T."/>
            <person name="Hosouchi T."/>
            <person name="Kawashima K."/>
            <person name="Kohara M."/>
            <person name="Matsumoto M."/>
            <person name="Matsuno A."/>
            <person name="Muraki A."/>
            <person name="Nakayama S."/>
            <person name="Nakazaki N."/>
            <person name="Naruo K."/>
            <person name="Okumura S."/>
            <person name="Shinpo S."/>
            <person name="Takeuchi C."/>
            <person name="Wada T."/>
            <person name="Watanabe A."/>
            <person name="Yamada M."/>
            <person name="Yasuda M."/>
            <person name="Sato S."/>
            <person name="de la Bastide M."/>
            <person name="Huang E."/>
            <person name="Spiegel L."/>
            <person name="Gnoj L."/>
            <person name="O'Shaughnessy A."/>
            <person name="Preston R."/>
            <person name="Habermann K."/>
            <person name="Murray J."/>
            <person name="Johnson D."/>
            <person name="Rohlfing T."/>
            <person name="Nelson J."/>
            <person name="Stoneking T."/>
            <person name="Pepin K."/>
            <person name="Spieth J."/>
            <person name="Sekhon M."/>
            <person name="Armstrong J."/>
            <person name="Becker M."/>
            <person name="Belter E."/>
            <person name="Cordum H."/>
            <person name="Cordes M."/>
            <person name="Courtney L."/>
            <person name="Courtney W."/>
            <person name="Dante M."/>
            <person name="Du H."/>
            <person name="Edwards J."/>
            <person name="Fryman J."/>
            <person name="Haakensen B."/>
            <person name="Lamar E."/>
            <person name="Latreille P."/>
            <person name="Leonard S."/>
            <person name="Meyer R."/>
            <person name="Mulvaney E."/>
            <person name="Ozersky P."/>
            <person name="Riley A."/>
            <person name="Strowmatt C."/>
            <person name="Wagner-McPherson C."/>
            <person name="Wollam A."/>
            <person name="Yoakum M."/>
            <person name="Bell M."/>
            <person name="Dedhia N."/>
            <person name="Parnell L."/>
            <person name="Shah R."/>
            <person name="Rodriguez M."/>
            <person name="Hoon See L."/>
            <person name="Vil D."/>
            <person name="Baker J."/>
            <person name="Kirchoff K."/>
            <person name="Toth K."/>
            <person name="King L."/>
            <person name="Bahret A."/>
            <person name="Miller B."/>
            <person name="Marra M.A."/>
            <person name="Martienssen R."/>
            <person name="McCombie W.R."/>
            <person name="Wilson R.K."/>
            <person name="Murphy G."/>
            <person name="Bancroft I."/>
            <person name="Volckaert G."/>
            <person name="Wambutt R."/>
            <person name="Duesterhoeft A."/>
            <person name="Stiekema W."/>
            <person name="Pohl T."/>
            <person name="Entian K.-D."/>
            <person name="Terryn N."/>
            <person name="Hartley N."/>
            <person name="Bent E."/>
            <person name="Johnson S."/>
            <person name="Langham S.-A."/>
            <person name="McCullagh B."/>
            <person name="Robben J."/>
            <person name="Grymonprez B."/>
            <person name="Zimmermann W."/>
            <person name="Ramsperger U."/>
            <person name="Wedler H."/>
            <person name="Balke K."/>
            <person name="Wedler E."/>
            <person name="Peters S."/>
            <person name="van Staveren M."/>
            <person name="Dirkse W."/>
            <person name="Mooijman P."/>
            <person name="Klein Lankhorst R."/>
            <person name="Weitzenegger T."/>
            <person name="Bothe G."/>
            <person name="Rose M."/>
            <person name="Hauf J."/>
            <person name="Berneiser S."/>
            <person name="Hempel S."/>
            <person name="Feldpausch M."/>
            <person name="Lamberth S."/>
            <person name="Villarroel R."/>
            <person name="Gielen J."/>
            <person name="Ardiles W."/>
            <person name="Bents O."/>
            <person name="Lemcke K."/>
            <person name="Kolesov G."/>
            <person name="Mayer K.F.X."/>
            <person name="Rudd S."/>
            <person name="Schoof H."/>
            <person name="Schueller C."/>
            <person name="Zaccaria P."/>
            <person name="Mewes H.-W."/>
            <person name="Bevan M."/>
            <person name="Fransz P.F."/>
        </authorList>
    </citation>
    <scope>NUCLEOTIDE SEQUENCE [LARGE SCALE GENOMIC DNA]</scope>
    <source>
        <strain>cv. Columbia</strain>
    </source>
</reference>
<reference key="2">
    <citation type="journal article" date="2017" name="Plant J.">
        <title>Araport11: a complete reannotation of the Arabidopsis thaliana reference genome.</title>
        <authorList>
            <person name="Cheng C.Y."/>
            <person name="Krishnakumar V."/>
            <person name="Chan A.P."/>
            <person name="Thibaud-Nissen F."/>
            <person name="Schobel S."/>
            <person name="Town C.D."/>
        </authorList>
    </citation>
    <scope>GENOME REANNOTATION</scope>
    <source>
        <strain>cv. Columbia</strain>
    </source>
</reference>
<reference key="3">
    <citation type="submission" date="2004-10" db="EMBL/GenBank/DDBJ databases">
        <title>Arabidopsis ORF clones.</title>
        <authorList>
            <person name="Kim C.J."/>
            <person name="Chen H."/>
            <person name="Cheuk R.F."/>
            <person name="Shinn P."/>
            <person name="Ecker J.R."/>
        </authorList>
    </citation>
    <scope>NUCLEOTIDE SEQUENCE [LARGE SCALE MRNA]</scope>
    <source>
        <strain>cv. Columbia</strain>
    </source>
</reference>
<reference key="4">
    <citation type="submission" date="2006-07" db="EMBL/GenBank/DDBJ databases">
        <title>Large-scale analysis of RIKEN Arabidopsis full-length (RAFL) cDNAs.</title>
        <authorList>
            <person name="Totoki Y."/>
            <person name="Seki M."/>
            <person name="Ishida J."/>
            <person name="Nakajima M."/>
            <person name="Enju A."/>
            <person name="Kamiya A."/>
            <person name="Narusaka M."/>
            <person name="Shin-i T."/>
            <person name="Nakagawa M."/>
            <person name="Sakamoto N."/>
            <person name="Oishi K."/>
            <person name="Kohara Y."/>
            <person name="Kobayashi M."/>
            <person name="Toyoda A."/>
            <person name="Sakaki Y."/>
            <person name="Sakurai T."/>
            <person name="Iida K."/>
            <person name="Akiyama K."/>
            <person name="Satou M."/>
            <person name="Toyoda T."/>
            <person name="Konagaya A."/>
            <person name="Carninci P."/>
            <person name="Kawai J."/>
            <person name="Hayashizaki Y."/>
            <person name="Shinozaki K."/>
        </authorList>
    </citation>
    <scope>NUCLEOTIDE SEQUENCE [LARGE SCALE MRNA]</scope>
    <source>
        <strain>cv. Columbia</strain>
    </source>
</reference>
<reference key="5">
    <citation type="journal article" date="2012" name="J. Integr. Plant Biol.">
        <title>Four closely-related RING-type E3 ligases, APD1-4, are involved in pollen mitosis II regulation in Arabidopsis.</title>
        <authorList>
            <person name="Luo G."/>
            <person name="Gu H."/>
            <person name="Liu J."/>
            <person name="Qu L.-J."/>
        </authorList>
    </citation>
    <scope>FUNCTION</scope>
    <scope>DISRUPTION PHENOTYPE</scope>
    <scope>CATALYTIC ACTIVITY</scope>
    <scope>PATHWAY</scope>
    <scope>SUBCELLULAR LOCATION</scope>
    <scope>TISSUE SPECIFICITY</scope>
    <scope>DEVELOPMENTAL STAGE</scope>
    <scope>INTERACTION WITH AT1G78040; AT1G10650; VHA-C4/AVAP4; VHA-C''2/VMA16 AND TUFA</scope>
    <scope>GENE FAMILY</scope>
    <scope>NOMENCLATURE</scope>
    <source>
        <strain>cv. Columbia</strain>
    </source>
</reference>
<comment type="function">
    <text evidence="4">Exhibits E2-dependent E3 ligase activity (PubMed:22897245). Involved in pollen mitosis II (PMII) regulation during male gametogenesis (PubMed:22897245).</text>
</comment>
<comment type="catalytic activity">
    <reaction evidence="4">
        <text>S-ubiquitinyl-[E2 ubiquitin-conjugating enzyme]-L-cysteine + [acceptor protein]-L-lysine = [E2 ubiquitin-conjugating enzyme]-L-cysteine + N(6)-ubiquitinyl-[acceptor protein]-L-lysine.</text>
        <dbReference type="EC" id="2.3.2.27"/>
    </reaction>
</comment>
<comment type="pathway">
    <text evidence="4">Protein modification; protein ubiquitination.</text>
</comment>
<comment type="subunit">
    <text evidence="4">Interacts with At1g78040, At1g10650, VHA-c4/AVAP4, VHA-c''2/VMA16 and TUFA.</text>
</comment>
<comment type="subcellular location">
    <subcellularLocation>
        <location evidence="4">Endomembrane system</location>
        <topology evidence="1">Multi-pass membrane protein</topology>
    </subcellularLocation>
    <text evidence="4">Associated with intracellular membranes and in the tonoplast and endosomes in the germinating pollen tubes.</text>
</comment>
<comment type="tissue specificity">
    <text evidence="4">Expressed in the shoot apical meristems (SAM), root tips, pollen and inflorescences.</text>
</comment>
<comment type="developmental stage">
    <text evidence="4">In young seedlings, expressed in the shoot apical meristem (SAM) and in root tips (PubMed:22897245). In inflorescence, specifically observed in mature pollen (PubMed:22897245). Present from the early bicellular pollen stage to the mature pollen stage; levels in vegetative cells increase during the development of pollen (PubMed:22897245). Detected in the germinating pollen tubes (PubMed:22897245).</text>
</comment>
<comment type="disruption phenotype">
    <text evidence="4">No obvious defects during the vegetative developmental stage (PubMed:22897245). The double mutant lacking both APD1 and APD2 exhibits an increased percentage of bicellular-like pollen at the mature pollen stage (PubMed:22897245). Plants lacking APD1, APD2, APD3 and APD4 are defective for cell division in male gametogenesis resulting in severe abnormal bicellular-like pollen phenotypes (PubMed:22897245).</text>
</comment>
<comment type="sequence caution" evidence="6">
    <conflict type="erroneous gene model prediction">
        <sequence resource="EMBL-CDS" id="CAB81928"/>
    </conflict>
</comment>
<name>APD2_ARATH</name>
<accession>Q6DBH0</accession>
<accession>Q9M029</accession>
<sequence length="444" mass="49277">MSLPDSLPSSSSSPPVTREETGFHRFEHHGNDSGFDHRDRPPWNRSEYDYRHGSVVASENVRNNSTSEDPWSCVVVVATFCIFVSMTLILGLYGTTNVWLGPNSSFLIKPTSVFVQNVIVEELGNKGSGLILYGLNQAPQLDVLTKWSEVHYLAVPNDSYKYWIQYLNKGSRVKVSYNVESVGSSLYLVIAQGVDGLSEWVQDPTRPDTTLSWHIISDSGYIEQDITKSSSYYVAVGNVYLNEVKATIDIQVEGVLYDTTNAYYNCSFPNDKCTLSVPLFGTNAAVLTSPGPKLNNSKNEFCAKLSYEPRWIAYIVCMGVVTALLLIVSSLFNKRQPVTEDETVDENDDVAPLIPGKDDDNSSWCSSYSSILTSTEELEGAHGEGHSSTRYLCAICYDAPRDCFFLSCGHCVACFQCGTRIAETSGFCPVCRKKIRKVKKIFNV</sequence>
<dbReference type="EC" id="2.3.2.27" evidence="4"/>
<dbReference type="EMBL" id="AL161746">
    <property type="protein sequence ID" value="CAB81928.1"/>
    <property type="status" value="ALT_SEQ"/>
    <property type="molecule type" value="Genomic_DNA"/>
</dbReference>
<dbReference type="EMBL" id="CP002688">
    <property type="protein sequence ID" value="AED90346.1"/>
    <property type="molecule type" value="Genomic_DNA"/>
</dbReference>
<dbReference type="EMBL" id="BT015052">
    <property type="protein sequence ID" value="AAT71924.1"/>
    <property type="molecule type" value="mRNA"/>
</dbReference>
<dbReference type="EMBL" id="BT015858">
    <property type="protein sequence ID" value="AAU94421.1"/>
    <property type="molecule type" value="mRNA"/>
</dbReference>
<dbReference type="EMBL" id="AK229004">
    <property type="protein sequence ID" value="BAF00891.1"/>
    <property type="molecule type" value="mRNA"/>
</dbReference>
<dbReference type="PIR" id="T48167">
    <property type="entry name" value="T48167"/>
</dbReference>
<dbReference type="RefSeq" id="NP_195765.3">
    <property type="nucleotide sequence ID" value="NM_120223.5"/>
</dbReference>
<dbReference type="SMR" id="Q6DBH0"/>
<dbReference type="FunCoup" id="Q6DBH0">
    <property type="interactions" value="658"/>
</dbReference>
<dbReference type="STRING" id="3702.Q6DBH0"/>
<dbReference type="iPTMnet" id="Q6DBH0"/>
<dbReference type="PaxDb" id="3702-AT5G01450.1"/>
<dbReference type="ProteomicsDB" id="185190"/>
<dbReference type="EnsemblPlants" id="AT5G01450.1">
    <property type="protein sequence ID" value="AT5G01450.1"/>
    <property type="gene ID" value="AT5G01450"/>
</dbReference>
<dbReference type="GeneID" id="831860"/>
<dbReference type="Gramene" id="AT5G01450.1">
    <property type="protein sequence ID" value="AT5G01450.1"/>
    <property type="gene ID" value="AT5G01450"/>
</dbReference>
<dbReference type="KEGG" id="ath:AT5G01450"/>
<dbReference type="Araport" id="AT5G01450"/>
<dbReference type="TAIR" id="AT5G01450">
    <property type="gene designation" value="APD2"/>
</dbReference>
<dbReference type="eggNOG" id="KOG4275">
    <property type="taxonomic scope" value="Eukaryota"/>
</dbReference>
<dbReference type="HOGENOM" id="CLU_040868_1_0_1"/>
<dbReference type="InParanoid" id="Q6DBH0"/>
<dbReference type="OMA" id="HNTTNAY"/>
<dbReference type="PhylomeDB" id="Q6DBH0"/>
<dbReference type="UniPathway" id="UPA00143"/>
<dbReference type="PRO" id="PR:Q6DBH0"/>
<dbReference type="Proteomes" id="UP000006548">
    <property type="component" value="Chromosome 5"/>
</dbReference>
<dbReference type="ExpressionAtlas" id="Q6DBH0">
    <property type="expression patterns" value="baseline and differential"/>
</dbReference>
<dbReference type="GO" id="GO:0005768">
    <property type="term" value="C:endosome"/>
    <property type="evidence" value="ECO:0000314"/>
    <property type="project" value="UniProtKB"/>
</dbReference>
<dbReference type="GO" id="GO:0009705">
    <property type="term" value="C:plant-type vacuole membrane"/>
    <property type="evidence" value="ECO:0000314"/>
    <property type="project" value="UniProtKB"/>
</dbReference>
<dbReference type="GO" id="GO:0004842">
    <property type="term" value="F:ubiquitin-protein transferase activity"/>
    <property type="evidence" value="ECO:0000314"/>
    <property type="project" value="UniProtKB"/>
</dbReference>
<dbReference type="GO" id="GO:0008270">
    <property type="term" value="F:zinc ion binding"/>
    <property type="evidence" value="ECO:0007669"/>
    <property type="project" value="UniProtKB-KW"/>
</dbReference>
<dbReference type="GO" id="GO:0000278">
    <property type="term" value="P:mitotic cell cycle"/>
    <property type="evidence" value="ECO:0000315"/>
    <property type="project" value="TAIR"/>
</dbReference>
<dbReference type="GO" id="GO:0009555">
    <property type="term" value="P:pollen development"/>
    <property type="evidence" value="ECO:0000315"/>
    <property type="project" value="UniProtKB"/>
</dbReference>
<dbReference type="GO" id="GO:0016567">
    <property type="term" value="P:protein ubiquitination"/>
    <property type="evidence" value="ECO:0000314"/>
    <property type="project" value="UniProtKB"/>
</dbReference>
<dbReference type="FunFam" id="3.30.40.10:FF:000658">
    <property type="entry name" value="E3 ubiquitin-protein ligase APD2"/>
    <property type="match status" value="1"/>
</dbReference>
<dbReference type="Gene3D" id="3.30.40.10">
    <property type="entry name" value="Zinc/RING finger domain, C3HC4 (zinc finger)"/>
    <property type="match status" value="1"/>
</dbReference>
<dbReference type="InterPro" id="IPR032010">
    <property type="entry name" value="APD1-4_M"/>
</dbReference>
<dbReference type="InterPro" id="IPR032008">
    <property type="entry name" value="APD1-4_N"/>
</dbReference>
<dbReference type="InterPro" id="IPR001841">
    <property type="entry name" value="Znf_RING"/>
</dbReference>
<dbReference type="InterPro" id="IPR013083">
    <property type="entry name" value="Znf_RING/FYVE/PHD"/>
</dbReference>
<dbReference type="PANTHER" id="PTHR46858:SF8">
    <property type="entry name" value="E3 UBIQUITIN-PROTEIN LIGASE APD2"/>
    <property type="match status" value="1"/>
</dbReference>
<dbReference type="PANTHER" id="PTHR46858">
    <property type="entry name" value="OS05G0521000 PROTEIN"/>
    <property type="match status" value="1"/>
</dbReference>
<dbReference type="Pfam" id="PF16041">
    <property type="entry name" value="APD1-4_M"/>
    <property type="match status" value="1"/>
</dbReference>
<dbReference type="Pfam" id="PF16040">
    <property type="entry name" value="APD1-4_N"/>
    <property type="match status" value="1"/>
</dbReference>
<dbReference type="Pfam" id="PF13920">
    <property type="entry name" value="zf-C3HC4_3"/>
    <property type="match status" value="1"/>
</dbReference>
<dbReference type="SUPFAM" id="SSF57850">
    <property type="entry name" value="RING/U-box"/>
    <property type="match status" value="1"/>
</dbReference>
<dbReference type="PROSITE" id="PS50089">
    <property type="entry name" value="ZF_RING_2"/>
    <property type="match status" value="1"/>
</dbReference>
<keyword id="KW-0472">Membrane</keyword>
<keyword id="KW-0479">Metal-binding</keyword>
<keyword id="KW-1185">Reference proteome</keyword>
<keyword id="KW-0808">Transferase</keyword>
<keyword id="KW-0812">Transmembrane</keyword>
<keyword id="KW-1133">Transmembrane helix</keyword>
<keyword id="KW-0833">Ubl conjugation pathway</keyword>
<keyword id="KW-0862">Zinc</keyword>
<keyword id="KW-0863">Zinc-finger</keyword>